<gene>
    <name evidence="1" type="primary">rsmA</name>
    <name evidence="1" type="synonym">ksgA</name>
    <name type="ordered locus">Hore_21720</name>
</gene>
<name>RSMA_HALOH</name>
<sequence length="301" mass="34280">MDKVIATPGGTNEIIRKYNLKLHKGLGQNFLIDQNIVDKIINTADLNNEDIVIEIGPGIGSLTQKIVPRSGRVFAFEKDKRLVKVLRELFNGYNHLEVIGQDVLEVDWKHFFDSRGISDRSVKVLANLPYYITTPVIMGLLESNITFSLMVLMVQKEVADRMAAAPGSKDYGALSVAVQYYGEVEIFHKVPPTVFIPRPRVYSSIIKIKPHSEPVYRVKNEGFFFKMVRAIFQQRRKTLKNSLTKSSEIKLDKGIVTEAIRELGLDPRIRGEKLTIKQMAILSNTLWYKISEEDGENHEIY</sequence>
<proteinExistence type="inferred from homology"/>
<protein>
    <recommendedName>
        <fullName evidence="1">Ribosomal RNA small subunit methyltransferase A</fullName>
        <ecNumber evidence="1">2.1.1.182</ecNumber>
    </recommendedName>
    <alternativeName>
        <fullName evidence="1">16S rRNA (adenine(1518)-N(6)/adenine(1519)-N(6))-dimethyltransferase</fullName>
    </alternativeName>
    <alternativeName>
        <fullName evidence="1">16S rRNA dimethyladenosine transferase</fullName>
    </alternativeName>
    <alternativeName>
        <fullName evidence="1">16S rRNA dimethylase</fullName>
    </alternativeName>
    <alternativeName>
        <fullName evidence="1">S-adenosylmethionine-6-N', N'-adenosyl(rRNA) dimethyltransferase</fullName>
    </alternativeName>
</protein>
<feature type="chain" id="PRO_1000194384" description="Ribosomal RNA small subunit methyltransferase A">
    <location>
        <begin position="1"/>
        <end position="301"/>
    </location>
</feature>
<feature type="binding site" evidence="1">
    <location>
        <position position="29"/>
    </location>
    <ligand>
        <name>S-adenosyl-L-methionine</name>
        <dbReference type="ChEBI" id="CHEBI:59789"/>
    </ligand>
</feature>
<feature type="binding site" evidence="1">
    <location>
        <position position="31"/>
    </location>
    <ligand>
        <name>S-adenosyl-L-methionine</name>
        <dbReference type="ChEBI" id="CHEBI:59789"/>
    </ligand>
</feature>
<feature type="binding site" evidence="1">
    <location>
        <position position="56"/>
    </location>
    <ligand>
        <name>S-adenosyl-L-methionine</name>
        <dbReference type="ChEBI" id="CHEBI:59789"/>
    </ligand>
</feature>
<feature type="binding site" evidence="1">
    <location>
        <position position="77"/>
    </location>
    <ligand>
        <name>S-adenosyl-L-methionine</name>
        <dbReference type="ChEBI" id="CHEBI:59789"/>
    </ligand>
</feature>
<feature type="binding site" evidence="1">
    <location>
        <position position="102"/>
    </location>
    <ligand>
        <name>S-adenosyl-L-methionine</name>
        <dbReference type="ChEBI" id="CHEBI:59789"/>
    </ligand>
</feature>
<feature type="binding site" evidence="1">
    <location>
        <position position="127"/>
    </location>
    <ligand>
        <name>S-adenosyl-L-methionine</name>
        <dbReference type="ChEBI" id="CHEBI:59789"/>
    </ligand>
</feature>
<accession>B8D0I2</accession>
<comment type="function">
    <text evidence="1">Specifically dimethylates two adjacent adenosines (A1518 and A1519) in the loop of a conserved hairpin near the 3'-end of 16S rRNA in the 30S particle. May play a critical role in biogenesis of 30S subunits.</text>
</comment>
<comment type="catalytic activity">
    <reaction evidence="1">
        <text>adenosine(1518)/adenosine(1519) in 16S rRNA + 4 S-adenosyl-L-methionine = N(6)-dimethyladenosine(1518)/N(6)-dimethyladenosine(1519) in 16S rRNA + 4 S-adenosyl-L-homocysteine + 4 H(+)</text>
        <dbReference type="Rhea" id="RHEA:19609"/>
        <dbReference type="Rhea" id="RHEA-COMP:10232"/>
        <dbReference type="Rhea" id="RHEA-COMP:10233"/>
        <dbReference type="ChEBI" id="CHEBI:15378"/>
        <dbReference type="ChEBI" id="CHEBI:57856"/>
        <dbReference type="ChEBI" id="CHEBI:59789"/>
        <dbReference type="ChEBI" id="CHEBI:74411"/>
        <dbReference type="ChEBI" id="CHEBI:74493"/>
        <dbReference type="EC" id="2.1.1.182"/>
    </reaction>
</comment>
<comment type="subcellular location">
    <subcellularLocation>
        <location evidence="1">Cytoplasm</location>
    </subcellularLocation>
</comment>
<comment type="similarity">
    <text evidence="1">Belongs to the class I-like SAM-binding methyltransferase superfamily. rRNA adenine N(6)-methyltransferase family. RsmA subfamily.</text>
</comment>
<dbReference type="EC" id="2.1.1.182" evidence="1"/>
<dbReference type="EMBL" id="CP001098">
    <property type="protein sequence ID" value="ACL70918.1"/>
    <property type="molecule type" value="Genomic_DNA"/>
</dbReference>
<dbReference type="RefSeq" id="WP_015923887.1">
    <property type="nucleotide sequence ID" value="NC_011899.1"/>
</dbReference>
<dbReference type="SMR" id="B8D0I2"/>
<dbReference type="STRING" id="373903.Hore_21720"/>
<dbReference type="KEGG" id="hor:Hore_21720"/>
<dbReference type="eggNOG" id="COG0030">
    <property type="taxonomic scope" value="Bacteria"/>
</dbReference>
<dbReference type="HOGENOM" id="CLU_041220_0_0_9"/>
<dbReference type="OrthoDB" id="9814755at2"/>
<dbReference type="Proteomes" id="UP000000719">
    <property type="component" value="Chromosome"/>
</dbReference>
<dbReference type="GO" id="GO:0005829">
    <property type="term" value="C:cytosol"/>
    <property type="evidence" value="ECO:0007669"/>
    <property type="project" value="TreeGrafter"/>
</dbReference>
<dbReference type="GO" id="GO:0052908">
    <property type="term" value="F:16S rRNA (adenine(1518)-N(6)/adenine(1519)-N(6))-dimethyltransferase activity"/>
    <property type="evidence" value="ECO:0007669"/>
    <property type="project" value="UniProtKB-EC"/>
</dbReference>
<dbReference type="GO" id="GO:0003723">
    <property type="term" value="F:RNA binding"/>
    <property type="evidence" value="ECO:0007669"/>
    <property type="project" value="UniProtKB-KW"/>
</dbReference>
<dbReference type="FunFam" id="3.40.50.150:FF:000023">
    <property type="entry name" value="Ribosomal RNA small subunit methyltransferase A"/>
    <property type="match status" value="1"/>
</dbReference>
<dbReference type="Gene3D" id="1.10.8.100">
    <property type="entry name" value="Ribosomal RNA adenine dimethylase-like, domain 2"/>
    <property type="match status" value="1"/>
</dbReference>
<dbReference type="Gene3D" id="3.40.50.150">
    <property type="entry name" value="Vaccinia Virus protein VP39"/>
    <property type="match status" value="1"/>
</dbReference>
<dbReference type="HAMAP" id="MF_00607">
    <property type="entry name" value="16SrRNA_methyltr_A"/>
    <property type="match status" value="1"/>
</dbReference>
<dbReference type="InterPro" id="IPR001737">
    <property type="entry name" value="KsgA/Erm"/>
</dbReference>
<dbReference type="InterPro" id="IPR023165">
    <property type="entry name" value="rRNA_Ade_diMease-like_C"/>
</dbReference>
<dbReference type="InterPro" id="IPR020596">
    <property type="entry name" value="rRNA_Ade_Mease_Trfase_CS"/>
</dbReference>
<dbReference type="InterPro" id="IPR020598">
    <property type="entry name" value="rRNA_Ade_methylase_Trfase_N"/>
</dbReference>
<dbReference type="InterPro" id="IPR011530">
    <property type="entry name" value="rRNA_adenine_dimethylase"/>
</dbReference>
<dbReference type="InterPro" id="IPR029063">
    <property type="entry name" value="SAM-dependent_MTases_sf"/>
</dbReference>
<dbReference type="NCBIfam" id="TIGR00755">
    <property type="entry name" value="ksgA"/>
    <property type="match status" value="1"/>
</dbReference>
<dbReference type="PANTHER" id="PTHR11727">
    <property type="entry name" value="DIMETHYLADENOSINE TRANSFERASE"/>
    <property type="match status" value="1"/>
</dbReference>
<dbReference type="PANTHER" id="PTHR11727:SF7">
    <property type="entry name" value="DIMETHYLADENOSINE TRANSFERASE-RELATED"/>
    <property type="match status" value="1"/>
</dbReference>
<dbReference type="Pfam" id="PF00398">
    <property type="entry name" value="RrnaAD"/>
    <property type="match status" value="1"/>
</dbReference>
<dbReference type="SMART" id="SM00650">
    <property type="entry name" value="rADc"/>
    <property type="match status" value="1"/>
</dbReference>
<dbReference type="SUPFAM" id="SSF53335">
    <property type="entry name" value="S-adenosyl-L-methionine-dependent methyltransferases"/>
    <property type="match status" value="1"/>
</dbReference>
<dbReference type="PROSITE" id="PS01131">
    <property type="entry name" value="RRNA_A_DIMETH"/>
    <property type="match status" value="1"/>
</dbReference>
<dbReference type="PROSITE" id="PS51689">
    <property type="entry name" value="SAM_RNA_A_N6_MT"/>
    <property type="match status" value="1"/>
</dbReference>
<reference key="1">
    <citation type="journal article" date="2009" name="PLoS ONE">
        <title>Genome analysis of the anaerobic thermohalophilic bacterium Halothermothrix orenii.</title>
        <authorList>
            <person name="Mavromatis K."/>
            <person name="Ivanova N."/>
            <person name="Anderson I."/>
            <person name="Lykidis A."/>
            <person name="Hooper S.D."/>
            <person name="Sun H."/>
            <person name="Kunin V."/>
            <person name="Lapidus A."/>
            <person name="Hugenholtz P."/>
            <person name="Patel B."/>
            <person name="Kyrpides N.C."/>
        </authorList>
    </citation>
    <scope>NUCLEOTIDE SEQUENCE [LARGE SCALE GENOMIC DNA]</scope>
    <source>
        <strain>H 168 / OCM 544 / DSM 9562</strain>
    </source>
</reference>
<keyword id="KW-0963">Cytoplasm</keyword>
<keyword id="KW-0489">Methyltransferase</keyword>
<keyword id="KW-1185">Reference proteome</keyword>
<keyword id="KW-0694">RNA-binding</keyword>
<keyword id="KW-0698">rRNA processing</keyword>
<keyword id="KW-0949">S-adenosyl-L-methionine</keyword>
<keyword id="KW-0808">Transferase</keyword>
<evidence type="ECO:0000255" key="1">
    <source>
        <dbReference type="HAMAP-Rule" id="MF_00607"/>
    </source>
</evidence>
<organism>
    <name type="scientific">Halothermothrix orenii (strain H 168 / OCM 544 / DSM 9562)</name>
    <dbReference type="NCBI Taxonomy" id="373903"/>
    <lineage>
        <taxon>Bacteria</taxon>
        <taxon>Bacillati</taxon>
        <taxon>Bacillota</taxon>
        <taxon>Clostridia</taxon>
        <taxon>Halanaerobiales</taxon>
        <taxon>Halothermotrichaceae</taxon>
        <taxon>Halothermothrix</taxon>
    </lineage>
</organism>